<evidence type="ECO:0000250" key="1"/>
<evidence type="ECO:0000250" key="2">
    <source>
        <dbReference type="UniProtKB" id="P02795"/>
    </source>
</evidence>
<evidence type="ECO:0000250" key="3">
    <source>
        <dbReference type="UniProtKB" id="P62339"/>
    </source>
</evidence>
<evidence type="ECO:0000305" key="4"/>
<protein>
    <recommendedName>
        <fullName>Metallothionein B</fullName>
        <shortName>MT-B</shortName>
        <shortName>MT-II</shortName>
    </recommendedName>
</protein>
<feature type="chain" id="PRO_0000197287" description="Metallothionein B">
    <location>
        <begin position="1"/>
        <end position="60"/>
    </location>
</feature>
<feature type="region of interest" description="Beta">
    <location>
        <begin position="1"/>
        <end position="28"/>
    </location>
</feature>
<feature type="region of interest" description="Alpha">
    <location>
        <begin position="29"/>
        <end position="60"/>
    </location>
</feature>
<feature type="binding site" evidence="2">
    <location>
        <position position="4"/>
    </location>
    <ligand>
        <name>a divalent metal cation</name>
        <dbReference type="ChEBI" id="CHEBI:60240"/>
        <label>1</label>
        <note>in cluster B</note>
    </ligand>
</feature>
<feature type="binding site" evidence="2">
    <location>
        <position position="6"/>
    </location>
    <ligand>
        <name>a divalent metal cation</name>
        <dbReference type="ChEBI" id="CHEBI:60240"/>
        <label>1</label>
        <note>in cluster B</note>
    </ligand>
</feature>
<feature type="binding site" evidence="2">
    <location>
        <position position="6"/>
    </location>
    <ligand>
        <name>a divalent metal cation</name>
        <dbReference type="ChEBI" id="CHEBI:60240"/>
        <label>2</label>
        <note>in cluster B</note>
    </ligand>
</feature>
<feature type="binding site" evidence="2">
    <location>
        <position position="12"/>
    </location>
    <ligand>
        <name>a divalent metal cation</name>
        <dbReference type="ChEBI" id="CHEBI:60240"/>
        <label>2</label>
        <note>in cluster B</note>
    </ligand>
</feature>
<feature type="binding site" evidence="2">
    <location>
        <position position="14"/>
    </location>
    <ligand>
        <name>a divalent metal cation</name>
        <dbReference type="ChEBI" id="CHEBI:60240"/>
        <label>2</label>
        <note>in cluster B</note>
    </ligand>
</feature>
<feature type="binding site" evidence="2">
    <location>
        <position position="14"/>
    </location>
    <ligand>
        <name>a divalent metal cation</name>
        <dbReference type="ChEBI" id="CHEBI:60240"/>
        <label>3</label>
        <note>in cluster B</note>
    </ligand>
</feature>
<feature type="binding site" evidence="2">
    <location>
        <position position="18"/>
    </location>
    <ligand>
        <name>a divalent metal cation</name>
        <dbReference type="ChEBI" id="CHEBI:60240"/>
        <label>3</label>
        <note>in cluster B</note>
    </ligand>
</feature>
<feature type="binding site" evidence="2">
    <location>
        <position position="20"/>
    </location>
    <ligand>
        <name>a divalent metal cation</name>
        <dbReference type="ChEBI" id="CHEBI:60240"/>
        <label>1</label>
        <note>in cluster B</note>
    </ligand>
</feature>
<feature type="binding site" evidence="2">
    <location>
        <position position="23"/>
    </location>
    <ligand>
        <name>a divalent metal cation</name>
        <dbReference type="ChEBI" id="CHEBI:60240"/>
        <label>1</label>
        <note>in cluster B</note>
    </ligand>
</feature>
<feature type="binding site" evidence="2">
    <location>
        <position position="23"/>
    </location>
    <ligand>
        <name>a divalent metal cation</name>
        <dbReference type="ChEBI" id="CHEBI:60240"/>
        <label>3</label>
        <note>in cluster B</note>
    </ligand>
</feature>
<feature type="binding site" evidence="2">
    <location>
        <position position="25"/>
    </location>
    <ligand>
        <name>a divalent metal cation</name>
        <dbReference type="ChEBI" id="CHEBI:60240"/>
        <label>2</label>
        <note>in cluster B</note>
    </ligand>
</feature>
<feature type="binding site" evidence="2">
    <location>
        <position position="28"/>
    </location>
    <ligand>
        <name>a divalent metal cation</name>
        <dbReference type="ChEBI" id="CHEBI:60240"/>
        <label>3</label>
        <note>in cluster B</note>
    </ligand>
</feature>
<feature type="binding site" evidence="2">
    <location>
        <position position="32"/>
    </location>
    <ligand>
        <name>a divalent metal cation</name>
        <dbReference type="ChEBI" id="CHEBI:60240"/>
        <label>4</label>
        <note>in cluster A</note>
    </ligand>
</feature>
<feature type="binding site" evidence="2">
    <location>
        <position position="33"/>
    </location>
    <ligand>
        <name>a divalent metal cation</name>
        <dbReference type="ChEBI" id="CHEBI:60240"/>
        <label>4</label>
        <note>in cluster A</note>
    </ligand>
</feature>
<feature type="binding site" evidence="2">
    <location>
        <position position="33"/>
    </location>
    <ligand>
        <name>a divalent metal cation</name>
        <dbReference type="ChEBI" id="CHEBI:60240"/>
        <label>5</label>
        <note>in cluster A</note>
    </ligand>
</feature>
<feature type="binding site" evidence="2">
    <location>
        <position position="35"/>
    </location>
    <ligand>
        <name>a divalent metal cation</name>
        <dbReference type="ChEBI" id="CHEBI:60240"/>
        <label>5</label>
        <note>in cluster A</note>
    </ligand>
</feature>
<feature type="binding site" evidence="2">
    <location>
        <position position="36"/>
    </location>
    <ligand>
        <name>a divalent metal cation</name>
        <dbReference type="ChEBI" id="CHEBI:60240"/>
        <label>5</label>
        <note>in cluster A</note>
    </ligand>
</feature>
<feature type="binding site" evidence="2">
    <location>
        <position position="36"/>
    </location>
    <ligand>
        <name>a divalent metal cation</name>
        <dbReference type="ChEBI" id="CHEBI:60240"/>
        <label>6</label>
        <note>in cluster A</note>
    </ligand>
</feature>
<feature type="binding site" evidence="2">
    <location>
        <position position="40"/>
    </location>
    <ligand>
        <name>a divalent metal cation</name>
        <dbReference type="ChEBI" id="CHEBI:60240"/>
        <label>6</label>
        <note>in cluster A</note>
    </ligand>
</feature>
<feature type="binding site" evidence="2">
    <location>
        <position position="43"/>
    </location>
    <ligand>
        <name>a divalent metal cation</name>
        <dbReference type="ChEBI" id="CHEBI:60240"/>
        <label>4</label>
        <note>in cluster A</note>
    </ligand>
</feature>
<feature type="binding site" evidence="2">
    <location>
        <position position="43"/>
    </location>
    <ligand>
        <name>a divalent metal cation</name>
        <dbReference type="ChEBI" id="CHEBI:60240"/>
        <label>6</label>
        <note>in cluster A</note>
    </ligand>
</feature>
<feature type="binding site" evidence="2">
    <location>
        <position position="47"/>
    </location>
    <ligand>
        <name>a divalent metal cation</name>
        <dbReference type="ChEBI" id="CHEBI:60240"/>
        <label>4</label>
        <note>in cluster A</note>
    </ligand>
</feature>
<feature type="binding site" evidence="2">
    <location>
        <position position="49"/>
    </location>
    <ligand>
        <name>a divalent metal cation</name>
        <dbReference type="ChEBI" id="CHEBI:60240"/>
        <label>5</label>
        <note>in cluster A</note>
    </ligand>
</feature>
<feature type="binding site" evidence="2">
    <location>
        <position position="49"/>
    </location>
    <ligand>
        <name>a divalent metal cation</name>
        <dbReference type="ChEBI" id="CHEBI:60240"/>
        <label>7</label>
        <note>in cluster A</note>
    </ligand>
</feature>
<feature type="binding site" evidence="3">
    <location>
        <position position="54"/>
    </location>
    <ligand>
        <name>a divalent metal cation</name>
        <dbReference type="ChEBI" id="CHEBI:60240"/>
        <label>7</label>
        <note>in cluster A</note>
    </ligand>
</feature>
<feature type="binding site" evidence="2">
    <location>
        <position position="58"/>
    </location>
    <ligand>
        <name>a divalent metal cation</name>
        <dbReference type="ChEBI" id="CHEBI:60240"/>
        <label>7</label>
        <note>in cluster A</note>
    </ligand>
</feature>
<feature type="binding site" evidence="2">
    <location>
        <position position="59"/>
    </location>
    <ligand>
        <name>a divalent metal cation</name>
        <dbReference type="ChEBI" id="CHEBI:60240"/>
        <label>6</label>
        <note>in cluster A</note>
    </ligand>
</feature>
<feature type="binding site" evidence="2">
    <location>
        <position position="59"/>
    </location>
    <ligand>
        <name>a divalent metal cation</name>
        <dbReference type="ChEBI" id="CHEBI:60240"/>
        <label>7</label>
        <note>in cluster A</note>
    </ligand>
</feature>
<dbReference type="EMBL" id="AJ007561">
    <property type="protein sequence ID" value="CAA07556.1"/>
    <property type="molecule type" value="mRNA"/>
</dbReference>
<dbReference type="SMR" id="P62713"/>
<dbReference type="FunCoup" id="P62713">
    <property type="interactions" value="82"/>
</dbReference>
<dbReference type="InParanoid" id="P62713"/>
<dbReference type="Proteomes" id="UP000515161">
    <property type="component" value="Unplaced"/>
</dbReference>
<dbReference type="GO" id="GO:0046872">
    <property type="term" value="F:metal ion binding"/>
    <property type="evidence" value="ECO:0007669"/>
    <property type="project" value="UniProtKB-KW"/>
</dbReference>
<dbReference type="FunFam" id="4.10.10.10:FF:000001">
    <property type="entry name" value="Metallothionein"/>
    <property type="match status" value="1"/>
</dbReference>
<dbReference type="Gene3D" id="4.10.10.10">
    <property type="entry name" value="Metallothionein Isoform II"/>
    <property type="match status" value="1"/>
</dbReference>
<dbReference type="InterPro" id="IPR017854">
    <property type="entry name" value="Metalthion_dom_sf"/>
</dbReference>
<dbReference type="InterPro" id="IPR023587">
    <property type="entry name" value="Metalthion_dom_sf_vert"/>
</dbReference>
<dbReference type="InterPro" id="IPR000006">
    <property type="entry name" value="Metalthion_vert"/>
</dbReference>
<dbReference type="InterPro" id="IPR018064">
    <property type="entry name" value="Metalthion_vert_metal_BS"/>
</dbReference>
<dbReference type="PANTHER" id="PTHR23299">
    <property type="entry name" value="METALLOTHIONEIN"/>
    <property type="match status" value="1"/>
</dbReference>
<dbReference type="PANTHER" id="PTHR23299:SF24">
    <property type="entry name" value="METALLOTHIONEIN-1X"/>
    <property type="match status" value="1"/>
</dbReference>
<dbReference type="Pfam" id="PF00131">
    <property type="entry name" value="Metallothio"/>
    <property type="match status" value="1"/>
</dbReference>
<dbReference type="PRINTS" id="PR00860">
    <property type="entry name" value="MTVERTEBRATE"/>
</dbReference>
<dbReference type="SUPFAM" id="SSF57868">
    <property type="entry name" value="Metallothionein"/>
    <property type="match status" value="1"/>
</dbReference>
<dbReference type="PROSITE" id="PS00203">
    <property type="entry name" value="METALLOTHIONEIN_VRT"/>
    <property type="match status" value="1"/>
</dbReference>
<keyword id="KW-0479">Metal-binding</keyword>
<keyword id="KW-0480">Metal-thiolate cluster</keyword>
<keyword id="KW-1185">Reference proteome</keyword>
<proteinExistence type="inferred from homology"/>
<sequence>MDPCDCSKSGTCNCGGSCTCTNCSCTSCKKSCCPCCPSGCTKCASGCVCKGKTCDTSCCQ</sequence>
<comment type="function">
    <text evidence="1">Metallothioneins have a high content of cysteine residues that bind various heavy metals.</text>
</comment>
<comment type="domain">
    <text>Class I metallothioneins contain 2 metal-binding domains: four divalent ions are chelated within cluster A of the alpha domain and are coordinated via cysteinyl thiolate bridges to 11 cysteine ligands. Cluster B, the corresponding region within the beta domain, can ligate three divalent ions to 9 cysteines.</text>
</comment>
<comment type="similarity">
    <text evidence="4">Belongs to the metallothionein superfamily. Type 1 family.</text>
</comment>
<organism>
    <name type="scientific">Gymnodraco acuticeps</name>
    <name type="common">Antarctic dragonfish</name>
    <dbReference type="NCBI Taxonomy" id="8218"/>
    <lineage>
        <taxon>Eukaryota</taxon>
        <taxon>Metazoa</taxon>
        <taxon>Chordata</taxon>
        <taxon>Craniata</taxon>
        <taxon>Vertebrata</taxon>
        <taxon>Euteleostomi</taxon>
        <taxon>Actinopterygii</taxon>
        <taxon>Neopterygii</taxon>
        <taxon>Teleostei</taxon>
        <taxon>Neoteleostei</taxon>
        <taxon>Acanthomorphata</taxon>
        <taxon>Eupercaria</taxon>
        <taxon>Perciformes</taxon>
        <taxon>Notothenioidei</taxon>
        <taxon>Bathydraconidae</taxon>
        <taxon>Gymnodraco</taxon>
    </lineage>
</organism>
<accession>P62713</accession>
<accession>O13259</accession>
<reference key="1">
    <citation type="journal article" date="1999" name="Mol. Biol. Evol.">
        <title>Metallothioneins in antarctic fish: evidence for independent duplication and gene conversion.</title>
        <authorList>
            <person name="Bargelloni L."/>
            <person name="Scudiero R."/>
            <person name="Parisi E."/>
            <person name="Carginale V."/>
            <person name="Capasso C."/>
            <person name="Patarnello T."/>
        </authorList>
    </citation>
    <scope>NUCLEOTIDE SEQUENCE [MRNA]</scope>
    <source>
        <tissue>Liver</tissue>
    </source>
</reference>
<gene>
    <name type="primary">mtb</name>
</gene>
<name>MTB_GYMAC</name>